<gene>
    <name evidence="1" type="primary">URM1</name>
    <name type="ORF">RCJMB04_15k18</name>
</gene>
<proteinExistence type="inferred from homology"/>
<evidence type="ECO:0000255" key="1">
    <source>
        <dbReference type="HAMAP-Rule" id="MF_03048"/>
    </source>
</evidence>
<keyword id="KW-0963">Cytoplasm</keyword>
<keyword id="KW-1017">Isopeptide bond</keyword>
<keyword id="KW-1185">Reference proteome</keyword>
<keyword id="KW-0819">tRNA processing</keyword>
<keyword id="KW-0833">Ubl conjugation pathway</keyword>
<dbReference type="EMBL" id="AJ720340">
    <property type="protein sequence ID" value="CAG31999.1"/>
    <property type="molecule type" value="mRNA"/>
</dbReference>
<dbReference type="RefSeq" id="NP_001007844.1">
    <property type="nucleotide sequence ID" value="NM_001007843.2"/>
</dbReference>
<dbReference type="SMR" id="Q5ZJU4"/>
<dbReference type="FunCoup" id="Q5ZJU4">
    <property type="interactions" value="2169"/>
</dbReference>
<dbReference type="STRING" id="9031.ENSGALP00000007958"/>
<dbReference type="PaxDb" id="9031-ENSGALP00000007958"/>
<dbReference type="Ensembl" id="ENSGALT00010066401.1">
    <property type="protein sequence ID" value="ENSGALP00010040666.1"/>
    <property type="gene ID" value="ENSGALG00010027388.1"/>
</dbReference>
<dbReference type="GeneID" id="417221"/>
<dbReference type="KEGG" id="gga:417221"/>
<dbReference type="CTD" id="81605"/>
<dbReference type="VEuPathDB" id="HostDB:geneid_417221"/>
<dbReference type="eggNOG" id="KOG4146">
    <property type="taxonomic scope" value="Eukaryota"/>
</dbReference>
<dbReference type="GeneTree" id="ENSGT00390000005101"/>
<dbReference type="HOGENOM" id="CLU_148208_0_1_1"/>
<dbReference type="InParanoid" id="Q5ZJU4"/>
<dbReference type="OMA" id="DYELQPN"/>
<dbReference type="OrthoDB" id="10248987at2759"/>
<dbReference type="PhylomeDB" id="Q5ZJU4"/>
<dbReference type="TreeFam" id="TF336363"/>
<dbReference type="UniPathway" id="UPA00988"/>
<dbReference type="PRO" id="PR:Q5ZJU4"/>
<dbReference type="Proteomes" id="UP000000539">
    <property type="component" value="Chromosome 17"/>
</dbReference>
<dbReference type="Bgee" id="ENSGALG00000004971">
    <property type="expression patterns" value="Expressed in granulocyte and 13 other cell types or tissues"/>
</dbReference>
<dbReference type="GO" id="GO:0005829">
    <property type="term" value="C:cytosol"/>
    <property type="evidence" value="ECO:0007669"/>
    <property type="project" value="UniProtKB-UniRule"/>
</dbReference>
<dbReference type="GO" id="GO:0005634">
    <property type="term" value="C:nucleus"/>
    <property type="evidence" value="ECO:0000318"/>
    <property type="project" value="GO_Central"/>
</dbReference>
<dbReference type="GO" id="GO:0031386">
    <property type="term" value="F:protein tag activity"/>
    <property type="evidence" value="ECO:0000318"/>
    <property type="project" value="GO_Central"/>
</dbReference>
<dbReference type="GO" id="GO:0032447">
    <property type="term" value="P:protein urmylation"/>
    <property type="evidence" value="ECO:0000318"/>
    <property type="project" value="GO_Central"/>
</dbReference>
<dbReference type="GO" id="GO:0034227">
    <property type="term" value="P:tRNA thio-modification"/>
    <property type="evidence" value="ECO:0000250"/>
    <property type="project" value="UniProtKB"/>
</dbReference>
<dbReference type="GO" id="GO:0002098">
    <property type="term" value="P:tRNA wobble uridine modification"/>
    <property type="evidence" value="ECO:0000250"/>
    <property type="project" value="UniProtKB"/>
</dbReference>
<dbReference type="CDD" id="cd01764">
    <property type="entry name" value="Ubl_Urm1"/>
    <property type="match status" value="1"/>
</dbReference>
<dbReference type="FunFam" id="3.10.20.30:FF:000021">
    <property type="entry name" value="Ubiquitin-related modifier 1"/>
    <property type="match status" value="1"/>
</dbReference>
<dbReference type="Gene3D" id="3.10.20.30">
    <property type="match status" value="1"/>
</dbReference>
<dbReference type="HAMAP" id="MF_03048">
    <property type="entry name" value="Urm1"/>
    <property type="match status" value="1"/>
</dbReference>
<dbReference type="InterPro" id="IPR012675">
    <property type="entry name" value="Beta-grasp_dom_sf"/>
</dbReference>
<dbReference type="InterPro" id="IPR016155">
    <property type="entry name" value="Mopterin_synth/thiamin_S_b"/>
</dbReference>
<dbReference type="InterPro" id="IPR015221">
    <property type="entry name" value="Urm1"/>
</dbReference>
<dbReference type="PANTHER" id="PTHR14986">
    <property type="entry name" value="RURM1 PROTEIN"/>
    <property type="match status" value="1"/>
</dbReference>
<dbReference type="Pfam" id="PF09138">
    <property type="entry name" value="Urm1"/>
    <property type="match status" value="1"/>
</dbReference>
<dbReference type="PIRSF" id="PIRSF037379">
    <property type="entry name" value="Ubiquitin-related_modifier_1"/>
    <property type="match status" value="1"/>
</dbReference>
<dbReference type="SUPFAM" id="SSF54285">
    <property type="entry name" value="MoaD/ThiS"/>
    <property type="match status" value="1"/>
</dbReference>
<comment type="function">
    <text evidence="1">Acts as a sulfur carrier required for 2-thiolation of mcm(5)S(2)U at tRNA wobble positions of cytosolic tRNA(Lys), tRNA(Glu) and tRNA(Gln). Serves as sulfur donor in tRNA 2-thiolation reaction by being thiocarboxylated (-COSH) at its C-terminus by MOCS3. The sulfur is then transferred to tRNA to form 2-thiolation of mcm(5)S(2)U. Also acts as a ubiquitin-like protein (UBL) that is covalently conjugated via an isopeptide bond to lysine residues of target proteins. The thiocarboxylated form serves as substrate for conjugation and oxidative stress specifically induces the formation of UBL-protein conjugates.</text>
</comment>
<comment type="pathway">
    <text evidence="1">tRNA modification; 5-methoxycarbonylmethyl-2-thiouridine-tRNA biosynthesis.</text>
</comment>
<comment type="subcellular location">
    <subcellularLocation>
        <location evidence="1">Cytoplasm</location>
    </subcellularLocation>
</comment>
<comment type="PTM">
    <text evidence="1">C-terminal thiocarboxylation occurs in 2 steps, it is first acyl-adenylated (-COAMP) via the hesA/moeB/thiF part of the MOCS3 homolog, then thiocarboxylated (-COSH) via the rhodanese domain of the MOCS3 homolog.</text>
</comment>
<comment type="similarity">
    <text evidence="1">Belongs to the URM1 family.</text>
</comment>
<protein>
    <recommendedName>
        <fullName evidence="1">Ubiquitin-related modifier 1</fullName>
    </recommendedName>
</protein>
<accession>Q5ZJU4</accession>
<name>URM1_CHICK</name>
<feature type="chain" id="PRO_0000367849" description="Ubiquitin-related modifier 1">
    <location>
        <begin position="1"/>
        <end position="101"/>
    </location>
</feature>
<feature type="modified residue" description="1-thioglycine" evidence="1">
    <location>
        <position position="101"/>
    </location>
</feature>
<feature type="cross-link" description="Glycyl lysine isopeptide (Gly-Lys) (interchain with K-? in acceptor proteins)" evidence="1">
    <location>
        <position position="101"/>
    </location>
</feature>
<sequence>MAAPVSLQVEFGGGAELLFDGVKKHQVTLPSQPEPWDIRNLLKWIKQNLLKERPELFMQGESVRPGILVLINDADWELMGELDYKLQDQDNVLFISTLHGG</sequence>
<organism>
    <name type="scientific">Gallus gallus</name>
    <name type="common">Chicken</name>
    <dbReference type="NCBI Taxonomy" id="9031"/>
    <lineage>
        <taxon>Eukaryota</taxon>
        <taxon>Metazoa</taxon>
        <taxon>Chordata</taxon>
        <taxon>Craniata</taxon>
        <taxon>Vertebrata</taxon>
        <taxon>Euteleostomi</taxon>
        <taxon>Archelosauria</taxon>
        <taxon>Archosauria</taxon>
        <taxon>Dinosauria</taxon>
        <taxon>Saurischia</taxon>
        <taxon>Theropoda</taxon>
        <taxon>Coelurosauria</taxon>
        <taxon>Aves</taxon>
        <taxon>Neognathae</taxon>
        <taxon>Galloanserae</taxon>
        <taxon>Galliformes</taxon>
        <taxon>Phasianidae</taxon>
        <taxon>Phasianinae</taxon>
        <taxon>Gallus</taxon>
    </lineage>
</organism>
<reference key="1">
    <citation type="journal article" date="2005" name="Genome Biol.">
        <title>Full-length cDNAs from chicken bursal lymphocytes to facilitate gene function analysis.</title>
        <authorList>
            <person name="Caldwell R.B."/>
            <person name="Kierzek A.M."/>
            <person name="Arakawa H."/>
            <person name="Bezzubov Y."/>
            <person name="Zaim J."/>
            <person name="Fiedler P."/>
            <person name="Kutter S."/>
            <person name="Blagodatski A."/>
            <person name="Kostovska D."/>
            <person name="Koter M."/>
            <person name="Plachy J."/>
            <person name="Carninci P."/>
            <person name="Hayashizaki Y."/>
            <person name="Buerstedde J.-M."/>
        </authorList>
    </citation>
    <scope>NUCLEOTIDE SEQUENCE [LARGE SCALE MRNA]</scope>
    <source>
        <strain>CB</strain>
        <tissue>Bursa of Fabricius</tissue>
    </source>
</reference>